<comment type="function">
    <text evidence="2">GTP hydrolase that promotes the GTP-dependent binding of aminoacyl-tRNA to the A-site of ribosomes during protein biosynthesis.</text>
</comment>
<comment type="catalytic activity">
    <reaction evidence="2">
        <text>GTP + H2O = GDP + phosphate + H(+)</text>
        <dbReference type="Rhea" id="RHEA:19669"/>
        <dbReference type="ChEBI" id="CHEBI:15377"/>
        <dbReference type="ChEBI" id="CHEBI:15378"/>
        <dbReference type="ChEBI" id="CHEBI:37565"/>
        <dbReference type="ChEBI" id="CHEBI:43474"/>
        <dbReference type="ChEBI" id="CHEBI:58189"/>
        <dbReference type="EC" id="3.6.5.3"/>
    </reaction>
    <physiologicalReaction direction="left-to-right" evidence="2">
        <dbReference type="Rhea" id="RHEA:19670"/>
    </physiologicalReaction>
</comment>
<comment type="subunit">
    <text evidence="2">Monomer.</text>
</comment>
<comment type="subcellular location">
    <subcellularLocation>
        <location evidence="2">Cytoplasm</location>
    </subcellularLocation>
</comment>
<comment type="similarity">
    <text evidence="2">Belongs to the TRAFAC class translation factor GTPase superfamily. Classic translation factor GTPase family. EF-Tu/EF-1A subfamily.</text>
</comment>
<organism>
    <name type="scientific">Helicobacter pylori (strain J99 / ATCC 700824)</name>
    <name type="common">Campylobacter pylori J99</name>
    <dbReference type="NCBI Taxonomy" id="85963"/>
    <lineage>
        <taxon>Bacteria</taxon>
        <taxon>Pseudomonadati</taxon>
        <taxon>Campylobacterota</taxon>
        <taxon>Epsilonproteobacteria</taxon>
        <taxon>Campylobacterales</taxon>
        <taxon>Helicobacteraceae</taxon>
        <taxon>Helicobacter</taxon>
    </lineage>
</organism>
<sequence length="399" mass="43730">MAKEKFNRTNPHVNIGTIGHVYHGKTTLSAAISAVLSLKGLAEMKDYDNIDNAPQEKERGITIATSHIEYETETRHYAHVDCPGHADYVKNMITGAAQMDGAILVVSAADGPMPQTREHILLSRQVGVPHIVVFLNKQDMVDDQELLELVEMEVRELLSAYEFPGDDTPIVAGSALRALEEAKAGNVGEWGEKVLKLMAEVDSYIPTPERDTEKTFLMPVEDVFSIAGRGTVVTGRIERGVVKVGDEVEIVGIRATQKTTVTGVEMFRKELEKGEAGDNVGVLLRGTKKEEVERGMVLCKPGSITPHKKFEEEIYVLSKEEGGRHTPFFTNYRPQFYVRTTDVTGSITLPEGVEMVMPGDNVKITVELISPVALELGTKFAIREGGRTVGAGVVSNIIE</sequence>
<gene>
    <name evidence="2" type="primary">tuf</name>
    <name type="synonym">tufA</name>
    <name type="ordered locus">jhp_1128</name>
</gene>
<keyword id="KW-0963">Cytoplasm</keyword>
<keyword id="KW-0251">Elongation factor</keyword>
<keyword id="KW-0342">GTP-binding</keyword>
<keyword id="KW-0378">Hydrolase</keyword>
<keyword id="KW-0460">Magnesium</keyword>
<keyword id="KW-0479">Metal-binding</keyword>
<keyword id="KW-0547">Nucleotide-binding</keyword>
<keyword id="KW-0648">Protein biosynthesis</keyword>
<accession>Q9ZK19</accession>
<name>EFTU_HELPJ</name>
<feature type="chain" id="PRO_0000091334" description="Elongation factor Tu">
    <location>
        <begin position="1"/>
        <end position="399"/>
    </location>
</feature>
<feature type="domain" description="tr-type G">
    <location>
        <begin position="10"/>
        <end position="209"/>
    </location>
</feature>
<feature type="region of interest" description="G1" evidence="1">
    <location>
        <begin position="19"/>
        <end position="26"/>
    </location>
</feature>
<feature type="region of interest" description="G2" evidence="1">
    <location>
        <begin position="60"/>
        <end position="64"/>
    </location>
</feature>
<feature type="region of interest" description="G3" evidence="1">
    <location>
        <begin position="81"/>
        <end position="84"/>
    </location>
</feature>
<feature type="region of interest" description="G4" evidence="1">
    <location>
        <begin position="136"/>
        <end position="139"/>
    </location>
</feature>
<feature type="region of interest" description="G5" evidence="1">
    <location>
        <begin position="174"/>
        <end position="176"/>
    </location>
</feature>
<feature type="binding site" evidence="2">
    <location>
        <begin position="19"/>
        <end position="26"/>
    </location>
    <ligand>
        <name>GTP</name>
        <dbReference type="ChEBI" id="CHEBI:37565"/>
    </ligand>
</feature>
<feature type="binding site" evidence="2">
    <location>
        <position position="26"/>
    </location>
    <ligand>
        <name>Mg(2+)</name>
        <dbReference type="ChEBI" id="CHEBI:18420"/>
    </ligand>
</feature>
<feature type="binding site" evidence="2">
    <location>
        <begin position="81"/>
        <end position="85"/>
    </location>
    <ligand>
        <name>GTP</name>
        <dbReference type="ChEBI" id="CHEBI:37565"/>
    </ligand>
</feature>
<feature type="binding site" evidence="2">
    <location>
        <begin position="136"/>
        <end position="139"/>
    </location>
    <ligand>
        <name>GTP</name>
        <dbReference type="ChEBI" id="CHEBI:37565"/>
    </ligand>
</feature>
<proteinExistence type="inferred from homology"/>
<protein>
    <recommendedName>
        <fullName evidence="2">Elongation factor Tu</fullName>
        <shortName evidence="2">EF-Tu</shortName>
        <ecNumber evidence="2">3.6.5.3</ecNumber>
    </recommendedName>
</protein>
<reference key="1">
    <citation type="journal article" date="1999" name="Nature">
        <title>Genomic sequence comparison of two unrelated isolates of the human gastric pathogen Helicobacter pylori.</title>
        <authorList>
            <person name="Alm R.A."/>
            <person name="Ling L.-S.L."/>
            <person name="Moir D.T."/>
            <person name="King B.L."/>
            <person name="Brown E.D."/>
            <person name="Doig P.C."/>
            <person name="Smith D.R."/>
            <person name="Noonan B."/>
            <person name="Guild B.C."/>
            <person name="deJonge B.L."/>
            <person name="Carmel G."/>
            <person name="Tummino P.J."/>
            <person name="Caruso A."/>
            <person name="Uria-Nickelsen M."/>
            <person name="Mills D.M."/>
            <person name="Ives C."/>
            <person name="Gibson R."/>
            <person name="Merberg D."/>
            <person name="Mills S.D."/>
            <person name="Jiang Q."/>
            <person name="Taylor D.E."/>
            <person name="Vovis G.F."/>
            <person name="Trust T.J."/>
        </authorList>
    </citation>
    <scope>NUCLEOTIDE SEQUENCE [LARGE SCALE GENOMIC DNA]</scope>
    <source>
        <strain>J99 / ATCC 700824</strain>
    </source>
</reference>
<dbReference type="EC" id="3.6.5.3" evidence="2"/>
<dbReference type="EMBL" id="AE001439">
    <property type="protein sequence ID" value="AAD06711.1"/>
    <property type="molecule type" value="Genomic_DNA"/>
</dbReference>
<dbReference type="PIR" id="E71844">
    <property type="entry name" value="E71844"/>
</dbReference>
<dbReference type="RefSeq" id="WP_001040589.1">
    <property type="nucleotide sequence ID" value="NC_000921.1"/>
</dbReference>
<dbReference type="SMR" id="Q9ZK19"/>
<dbReference type="KEGG" id="hpj:jhp_1128"/>
<dbReference type="eggNOG" id="COG0050">
    <property type="taxonomic scope" value="Bacteria"/>
</dbReference>
<dbReference type="Proteomes" id="UP000000804">
    <property type="component" value="Chromosome"/>
</dbReference>
<dbReference type="GO" id="GO:0005829">
    <property type="term" value="C:cytosol"/>
    <property type="evidence" value="ECO:0007669"/>
    <property type="project" value="TreeGrafter"/>
</dbReference>
<dbReference type="GO" id="GO:0005525">
    <property type="term" value="F:GTP binding"/>
    <property type="evidence" value="ECO:0007669"/>
    <property type="project" value="UniProtKB-UniRule"/>
</dbReference>
<dbReference type="GO" id="GO:0003924">
    <property type="term" value="F:GTPase activity"/>
    <property type="evidence" value="ECO:0007669"/>
    <property type="project" value="InterPro"/>
</dbReference>
<dbReference type="GO" id="GO:0003746">
    <property type="term" value="F:translation elongation factor activity"/>
    <property type="evidence" value="ECO:0007669"/>
    <property type="project" value="UniProtKB-UniRule"/>
</dbReference>
<dbReference type="CDD" id="cd01884">
    <property type="entry name" value="EF_Tu"/>
    <property type="match status" value="1"/>
</dbReference>
<dbReference type="CDD" id="cd03697">
    <property type="entry name" value="EFTU_II"/>
    <property type="match status" value="1"/>
</dbReference>
<dbReference type="CDD" id="cd03707">
    <property type="entry name" value="EFTU_III"/>
    <property type="match status" value="1"/>
</dbReference>
<dbReference type="FunFam" id="2.40.30.10:FF:000001">
    <property type="entry name" value="Elongation factor Tu"/>
    <property type="match status" value="1"/>
</dbReference>
<dbReference type="FunFam" id="3.40.50.300:FF:000003">
    <property type="entry name" value="Elongation factor Tu"/>
    <property type="match status" value="1"/>
</dbReference>
<dbReference type="Gene3D" id="3.40.50.300">
    <property type="entry name" value="P-loop containing nucleotide triphosphate hydrolases"/>
    <property type="match status" value="1"/>
</dbReference>
<dbReference type="Gene3D" id="2.40.30.10">
    <property type="entry name" value="Translation factors"/>
    <property type="match status" value="2"/>
</dbReference>
<dbReference type="HAMAP" id="MF_00118_B">
    <property type="entry name" value="EF_Tu_B"/>
    <property type="match status" value="1"/>
</dbReference>
<dbReference type="InterPro" id="IPR041709">
    <property type="entry name" value="EF-Tu_GTP-bd"/>
</dbReference>
<dbReference type="InterPro" id="IPR050055">
    <property type="entry name" value="EF-Tu_GTPase"/>
</dbReference>
<dbReference type="InterPro" id="IPR004161">
    <property type="entry name" value="EFTu-like_2"/>
</dbReference>
<dbReference type="InterPro" id="IPR033720">
    <property type="entry name" value="EFTU_2"/>
</dbReference>
<dbReference type="InterPro" id="IPR031157">
    <property type="entry name" value="G_TR_CS"/>
</dbReference>
<dbReference type="InterPro" id="IPR027417">
    <property type="entry name" value="P-loop_NTPase"/>
</dbReference>
<dbReference type="InterPro" id="IPR005225">
    <property type="entry name" value="Small_GTP-bd"/>
</dbReference>
<dbReference type="InterPro" id="IPR000795">
    <property type="entry name" value="T_Tr_GTP-bd_dom"/>
</dbReference>
<dbReference type="InterPro" id="IPR009000">
    <property type="entry name" value="Transl_B-barrel_sf"/>
</dbReference>
<dbReference type="InterPro" id="IPR009001">
    <property type="entry name" value="Transl_elong_EF1A/Init_IF2_C"/>
</dbReference>
<dbReference type="InterPro" id="IPR004541">
    <property type="entry name" value="Transl_elong_EFTu/EF1A_bac/org"/>
</dbReference>
<dbReference type="InterPro" id="IPR004160">
    <property type="entry name" value="Transl_elong_EFTu/EF1A_C"/>
</dbReference>
<dbReference type="NCBIfam" id="TIGR00485">
    <property type="entry name" value="EF-Tu"/>
    <property type="match status" value="1"/>
</dbReference>
<dbReference type="NCBIfam" id="NF000766">
    <property type="entry name" value="PRK00049.1"/>
    <property type="match status" value="1"/>
</dbReference>
<dbReference type="NCBIfam" id="NF009372">
    <property type="entry name" value="PRK12735.1"/>
    <property type="match status" value="1"/>
</dbReference>
<dbReference type="NCBIfam" id="NF009373">
    <property type="entry name" value="PRK12736.1"/>
    <property type="match status" value="1"/>
</dbReference>
<dbReference type="NCBIfam" id="TIGR00231">
    <property type="entry name" value="small_GTP"/>
    <property type="match status" value="1"/>
</dbReference>
<dbReference type="PANTHER" id="PTHR43721:SF22">
    <property type="entry name" value="ELONGATION FACTOR TU, MITOCHONDRIAL"/>
    <property type="match status" value="1"/>
</dbReference>
<dbReference type="PANTHER" id="PTHR43721">
    <property type="entry name" value="ELONGATION FACTOR TU-RELATED"/>
    <property type="match status" value="1"/>
</dbReference>
<dbReference type="Pfam" id="PF00009">
    <property type="entry name" value="GTP_EFTU"/>
    <property type="match status" value="1"/>
</dbReference>
<dbReference type="Pfam" id="PF03144">
    <property type="entry name" value="GTP_EFTU_D2"/>
    <property type="match status" value="1"/>
</dbReference>
<dbReference type="Pfam" id="PF03143">
    <property type="entry name" value="GTP_EFTU_D3"/>
    <property type="match status" value="1"/>
</dbReference>
<dbReference type="PRINTS" id="PR00315">
    <property type="entry name" value="ELONGATNFCT"/>
</dbReference>
<dbReference type="SUPFAM" id="SSF50465">
    <property type="entry name" value="EF-Tu/eEF-1alpha/eIF2-gamma C-terminal domain"/>
    <property type="match status" value="1"/>
</dbReference>
<dbReference type="SUPFAM" id="SSF52540">
    <property type="entry name" value="P-loop containing nucleoside triphosphate hydrolases"/>
    <property type="match status" value="1"/>
</dbReference>
<dbReference type="SUPFAM" id="SSF50447">
    <property type="entry name" value="Translation proteins"/>
    <property type="match status" value="1"/>
</dbReference>
<dbReference type="PROSITE" id="PS00301">
    <property type="entry name" value="G_TR_1"/>
    <property type="match status" value="1"/>
</dbReference>
<dbReference type="PROSITE" id="PS51722">
    <property type="entry name" value="G_TR_2"/>
    <property type="match status" value="1"/>
</dbReference>
<evidence type="ECO:0000250" key="1"/>
<evidence type="ECO:0000255" key="2">
    <source>
        <dbReference type="HAMAP-Rule" id="MF_00118"/>
    </source>
</evidence>